<dbReference type="EC" id="1.11.1.24" evidence="1"/>
<dbReference type="STRING" id="10036.ENSMAUP00000015272"/>
<dbReference type="eggNOG" id="KOG0541">
    <property type="taxonomic scope" value="Eukaryota"/>
</dbReference>
<dbReference type="Proteomes" id="UP000189706">
    <property type="component" value="Unplaced"/>
</dbReference>
<dbReference type="GO" id="GO:0005739">
    <property type="term" value="C:mitochondrion"/>
    <property type="evidence" value="ECO:0007669"/>
    <property type="project" value="UniProtKB-SubCell"/>
</dbReference>
<dbReference type="GO" id="GO:0005782">
    <property type="term" value="C:peroxisomal matrix"/>
    <property type="evidence" value="ECO:0007669"/>
    <property type="project" value="UniProtKB-SubCell"/>
</dbReference>
<dbReference type="GO" id="GO:0140824">
    <property type="term" value="F:thioredoxin-dependent peroxiredoxin activity"/>
    <property type="evidence" value="ECO:0007669"/>
    <property type="project" value="UniProtKB-EC"/>
</dbReference>
<feature type="chain" id="PRO_0000394425" description="Peroxiredoxin-5, mitochondrial">
    <location>
        <begin position="1" status="less than"/>
        <end position="18" status="greater than"/>
    </location>
</feature>
<feature type="domain" description="Thioredoxin" evidence="3">
    <location>
        <begin position="1" status="less than"/>
        <end position="18" status="greater than"/>
    </location>
</feature>
<feature type="modified residue" description="Phosphoserine" evidence="2">
    <location>
        <position position="12"/>
    </location>
</feature>
<feature type="non-terminal residue">
    <location>
        <position position="1"/>
    </location>
</feature>
<feature type="non-terminal residue">
    <location>
        <position position="18"/>
    </location>
</feature>
<gene>
    <name evidence="1" type="primary">PRDX5</name>
</gene>
<comment type="function">
    <text evidence="1">Thiol-specific peroxidase that catalyzes the reduction of hydrogen peroxide and organic hydroperoxides to water and alcohols, respectively. Plays a role in cell protection against oxidative stress by detoxifying peroxides and as sensor of hydrogen peroxide-mediated signaling events.</text>
</comment>
<comment type="catalytic activity">
    <reaction evidence="1">
        <text>a hydroperoxide + [thioredoxin]-dithiol = an alcohol + [thioredoxin]-disulfide + H2O</text>
        <dbReference type="Rhea" id="RHEA:62620"/>
        <dbReference type="Rhea" id="RHEA-COMP:10698"/>
        <dbReference type="Rhea" id="RHEA-COMP:10700"/>
        <dbReference type="ChEBI" id="CHEBI:15377"/>
        <dbReference type="ChEBI" id="CHEBI:29950"/>
        <dbReference type="ChEBI" id="CHEBI:30879"/>
        <dbReference type="ChEBI" id="CHEBI:35924"/>
        <dbReference type="ChEBI" id="CHEBI:50058"/>
        <dbReference type="EC" id="1.11.1.24"/>
    </reaction>
</comment>
<comment type="subunit">
    <text evidence="1">Monomer.</text>
</comment>
<comment type="subcellular location">
    <subcellularLocation>
        <location evidence="1">Mitochondrion</location>
    </subcellularLocation>
    <subcellularLocation>
        <location evidence="1">Cytoplasm</location>
    </subcellularLocation>
    <subcellularLocation>
        <location evidence="1">Peroxisome matrix</location>
    </subcellularLocation>
</comment>
<comment type="miscellaneous">
    <text evidence="1">The active site is a conserved redox-active cysteine residue, the peroxidatic cysteine (C(P)), which makes the nucleophilic attack on the peroxide substrate. The peroxide oxidizes the C(P)-SH to cysteine sulfenic acid (C(P)-SOH), which then reacts with another cysteine residue, the resolving cysteine (C(R)), to form a disulfide bridge. The disulfide is subsequently reduced by an appropriate electron donor to complete the catalytic cycle. In this atypical 2-Cys Prx, C(R) is present in the same subunit to form an intramolecular disulfide. The disulfide is subsequently reduced by thioredoxin.</text>
</comment>
<comment type="similarity">
    <text evidence="4">Belongs to the peroxiredoxin family. Prx5 subfamily.</text>
</comment>
<protein>
    <recommendedName>
        <fullName evidence="1">Peroxiredoxin-5, mitochondrial</fullName>
        <ecNumber evidence="1">1.11.1.24</ecNumber>
    </recommendedName>
    <alternativeName>
        <fullName evidence="1">Peroxiredoxin V</fullName>
        <shortName evidence="1">Prx-V</shortName>
    </alternativeName>
    <alternativeName>
        <fullName evidence="1">Thioredoxin peroxidase</fullName>
    </alternativeName>
    <alternativeName>
        <fullName evidence="4">Thioredoxin-dependent peroxiredoxin 5</fullName>
    </alternativeName>
</protein>
<organism>
    <name type="scientific">Mesocricetus auratus</name>
    <name type="common">Golden hamster</name>
    <dbReference type="NCBI Taxonomy" id="10036"/>
    <lineage>
        <taxon>Eukaryota</taxon>
        <taxon>Metazoa</taxon>
        <taxon>Chordata</taxon>
        <taxon>Craniata</taxon>
        <taxon>Vertebrata</taxon>
        <taxon>Euteleostomi</taxon>
        <taxon>Mammalia</taxon>
        <taxon>Eutheria</taxon>
        <taxon>Euarchontoglires</taxon>
        <taxon>Glires</taxon>
        <taxon>Rodentia</taxon>
        <taxon>Myomorpha</taxon>
        <taxon>Muroidea</taxon>
        <taxon>Cricetidae</taxon>
        <taxon>Cricetinae</taxon>
        <taxon>Mesocricetus</taxon>
    </lineage>
</organism>
<proteinExistence type="evidence at protein level"/>
<accession>P86241</accession>
<keyword id="KW-0049">Antioxidant</keyword>
<keyword id="KW-0963">Cytoplasm</keyword>
<keyword id="KW-0496">Mitochondrion</keyword>
<keyword id="KW-0560">Oxidoreductase</keyword>
<keyword id="KW-0575">Peroxidase</keyword>
<keyword id="KW-0576">Peroxisome</keyword>
<keyword id="KW-0597">Phosphoprotein</keyword>
<keyword id="KW-0676">Redox-active center</keyword>
<keyword id="KW-1185">Reference proteome</keyword>
<evidence type="ECO:0000250" key="1">
    <source>
        <dbReference type="UniProtKB" id="P30044"/>
    </source>
</evidence>
<evidence type="ECO:0000250" key="2">
    <source>
        <dbReference type="UniProtKB" id="Q9R063"/>
    </source>
</evidence>
<evidence type="ECO:0000255" key="3">
    <source>
        <dbReference type="PROSITE-ProRule" id="PRU00691"/>
    </source>
</evidence>
<evidence type="ECO:0000305" key="4"/>
<name>PRDX5_MESAU</name>
<reference key="1">
    <citation type="journal article" date="2010" name="Asian J. Androl.">
        <title>Glucose-regulated protein precursor (GRP78) and tumor rejection antigen (GP96) are unique to hamster caput epididymal spermatozoa.</title>
        <authorList>
            <person name="Kameshwari D.B."/>
            <person name="Bhande S."/>
            <person name="Sundaram C.S."/>
            <person name="Kota V."/>
            <person name="Siva A.B."/>
            <person name="Shivaji S."/>
        </authorList>
    </citation>
    <scope>IDENTIFICATION BY MASS SPECTROMETRY</scope>
</reference>
<sequence>ETDLLLDDSLVSLFGNRR</sequence>